<organism>
    <name type="scientific">Homo sapiens</name>
    <name type="common">Human</name>
    <dbReference type="NCBI Taxonomy" id="9606"/>
    <lineage>
        <taxon>Eukaryota</taxon>
        <taxon>Metazoa</taxon>
        <taxon>Chordata</taxon>
        <taxon>Craniata</taxon>
        <taxon>Vertebrata</taxon>
        <taxon>Euteleostomi</taxon>
        <taxon>Mammalia</taxon>
        <taxon>Eutheria</taxon>
        <taxon>Euarchontoglires</taxon>
        <taxon>Primates</taxon>
        <taxon>Haplorrhini</taxon>
        <taxon>Catarrhini</taxon>
        <taxon>Hominidae</taxon>
        <taxon>Homo</taxon>
    </lineage>
</organism>
<gene>
    <name type="primary">PEG3</name>
    <name type="synonym">KIAA0287</name>
    <name type="synonym">ZSCAN24</name>
</gene>
<feature type="chain" id="PRO_0000249228" description="Paternally-expressed gene 3 protein">
    <location>
        <begin position="1"/>
        <end position="1588"/>
    </location>
</feature>
<feature type="domain" description="SCAN box" evidence="3">
    <location>
        <begin position="46"/>
        <end position="128"/>
    </location>
</feature>
<feature type="repeat" description="2-1">
    <location>
        <begin position="1397"/>
        <end position="1403"/>
    </location>
</feature>
<feature type="repeat" description="2-2">
    <location>
        <begin position="1404"/>
        <end position="1410"/>
    </location>
</feature>
<feature type="repeat" description="2-3">
    <location>
        <begin position="1411"/>
        <end position="1417"/>
    </location>
</feature>
<feature type="repeat" description="1-1">
    <location>
        <begin position="1418"/>
        <end position="1422"/>
    </location>
</feature>
<feature type="repeat" description="1-2">
    <location>
        <begin position="1425"/>
        <end position="1429"/>
    </location>
</feature>
<feature type="repeat" description="1-3">
    <location>
        <begin position="1432"/>
        <end position="1436"/>
    </location>
</feature>
<feature type="repeat" description="1-4">
    <location>
        <begin position="1439"/>
        <end position="1443"/>
    </location>
</feature>
<feature type="zinc finger region" description="C2H2-type 1" evidence="2">
    <location>
        <begin position="452"/>
        <end position="474"/>
    </location>
</feature>
<feature type="zinc finger region" description="C2H2-type 2" evidence="2">
    <location>
        <begin position="505"/>
        <end position="527"/>
    </location>
</feature>
<feature type="zinc finger region" description="C2H2-type 3" evidence="2">
    <location>
        <begin position="563"/>
        <end position="585"/>
    </location>
</feature>
<feature type="zinc finger region" description="C2H2-type 4" evidence="2">
    <location>
        <begin position="627"/>
        <end position="649"/>
    </location>
</feature>
<feature type="zinc finger region" description="C2H2-type 5" evidence="2">
    <location>
        <begin position="969"/>
        <end position="991"/>
    </location>
</feature>
<feature type="zinc finger region" description="C2H2-type 6" evidence="2">
    <location>
        <begin position="1107"/>
        <end position="1129"/>
    </location>
</feature>
<feature type="zinc finger region" description="C2H2-type 7" evidence="2">
    <location>
        <begin position="1163"/>
        <end position="1185"/>
    </location>
</feature>
<feature type="zinc finger region" description="C2H2-type 8" evidence="2">
    <location>
        <begin position="1225"/>
        <end position="1247"/>
    </location>
</feature>
<feature type="zinc finger region" description="C2H2-type 9" evidence="2">
    <location>
        <begin position="1282"/>
        <end position="1304"/>
    </location>
</feature>
<feature type="zinc finger region" description="C2H2-type 10" evidence="2">
    <location>
        <begin position="1332"/>
        <end position="1354"/>
    </location>
</feature>
<feature type="zinc finger region" description="C2H2-type 11" evidence="2">
    <location>
        <begin position="1505"/>
        <end position="1527"/>
    </location>
</feature>
<feature type="zinc finger region" description="C2H2-type 12" evidence="2">
    <location>
        <begin position="1564"/>
        <end position="1586"/>
    </location>
</feature>
<feature type="region of interest" description="Disordered" evidence="4">
    <location>
        <begin position="128"/>
        <end position="231"/>
    </location>
</feature>
<feature type="region of interest" description="Disordered" evidence="4">
    <location>
        <begin position="265"/>
        <end position="304"/>
    </location>
</feature>
<feature type="region of interest" description="Disordered" evidence="4">
    <location>
        <begin position="317"/>
        <end position="347"/>
    </location>
</feature>
<feature type="region of interest" description="Disordered" evidence="4">
    <location>
        <begin position="588"/>
        <end position="608"/>
    </location>
</feature>
<feature type="region of interest" description="Disordered" evidence="4">
    <location>
        <begin position="839"/>
        <end position="889"/>
    </location>
</feature>
<feature type="region of interest" description="Disordered" evidence="4">
    <location>
        <begin position="905"/>
        <end position="929"/>
    </location>
</feature>
<feature type="region of interest" description="Disordered" evidence="4">
    <location>
        <begin position="1056"/>
        <end position="1104"/>
    </location>
</feature>
<feature type="region of interest" description="Disordered" evidence="4">
    <location>
        <begin position="1396"/>
        <end position="1495"/>
    </location>
</feature>
<feature type="region of interest" description="3 X 7 AA repeat of P-E-V-E-A-A-E">
    <location>
        <begin position="1397"/>
        <end position="1417"/>
    </location>
</feature>
<feature type="region of interest" description="4 X 5 AA repeat of P-X-G-E-A">
    <location>
        <begin position="1418"/>
        <end position="1443"/>
    </location>
</feature>
<feature type="compositionally biased region" description="Acidic residues" evidence="4">
    <location>
        <begin position="129"/>
        <end position="142"/>
    </location>
</feature>
<feature type="compositionally biased region" description="Basic and acidic residues" evidence="4">
    <location>
        <begin position="143"/>
        <end position="152"/>
    </location>
</feature>
<feature type="compositionally biased region" description="Basic and acidic residues" evidence="4">
    <location>
        <begin position="160"/>
        <end position="181"/>
    </location>
</feature>
<feature type="compositionally biased region" description="Basic and acidic residues" evidence="4">
    <location>
        <begin position="205"/>
        <end position="224"/>
    </location>
</feature>
<feature type="compositionally biased region" description="Basic and acidic residues" evidence="4">
    <location>
        <begin position="293"/>
        <end position="304"/>
    </location>
</feature>
<feature type="compositionally biased region" description="Basic and acidic residues" evidence="4">
    <location>
        <begin position="588"/>
        <end position="607"/>
    </location>
</feature>
<feature type="compositionally biased region" description="Basic and acidic residues" evidence="4">
    <location>
        <begin position="868"/>
        <end position="881"/>
    </location>
</feature>
<feature type="compositionally biased region" description="Basic and acidic residues" evidence="4">
    <location>
        <begin position="1071"/>
        <end position="1082"/>
    </location>
</feature>
<feature type="compositionally biased region" description="Acidic residues" evidence="4">
    <location>
        <begin position="1396"/>
        <end position="1415"/>
    </location>
</feature>
<feature type="compositionally biased region" description="Acidic residues" evidence="4">
    <location>
        <begin position="1449"/>
        <end position="1466"/>
    </location>
</feature>
<feature type="compositionally biased region" description="Acidic residues" evidence="4">
    <location>
        <begin position="1475"/>
        <end position="1495"/>
    </location>
</feature>
<feature type="splice variant" id="VSP_020371" description="In isoform 2 and isoform 4." evidence="11 12 13">
    <location>
        <begin position="1"/>
        <end position="126"/>
    </location>
</feature>
<feature type="splice variant" id="VSP_045527" description="In isoform 4." evidence="12 13">
    <original>S</original>
    <variation>SG</variation>
    <location>
        <position position="161"/>
    </location>
</feature>
<feature type="splice variant" id="VSP_045528" description="In isoform 4." evidence="12 13">
    <original>L</original>
    <variation>LG</variation>
    <location>
        <position position="257"/>
    </location>
</feature>
<feature type="splice variant" id="VSP_020372" description="In isoform 3." evidence="13">
    <location>
        <begin position="258"/>
        <end position="287"/>
    </location>
</feature>
<feature type="splice variant" id="VSP_020373" description="In isoform 3." evidence="13">
    <original>SPTF</original>
    <variation>NPCL</variation>
    <location>
        <begin position="547"/>
        <end position="550"/>
    </location>
</feature>
<feature type="splice variant" id="VSP_020374" description="In isoform 3." evidence="13">
    <location>
        <begin position="551"/>
        <end position="1588"/>
    </location>
</feature>
<feature type="sequence variant" id="VAR_027397" description="In dbSNP:rs2191432.">
    <original>A</original>
    <variation>T</variation>
    <location>
        <position position="235"/>
    </location>
</feature>
<feature type="sequence variant" id="VAR_035562" description="In a colorectal cancer sample; somatic mutation; dbSNP:rs754473044." evidence="9">
    <original>R</original>
    <variation>H</variation>
    <location>
        <position position="594"/>
    </location>
</feature>
<feature type="sequence variant" id="VAR_052725" description="In dbSNP:rs36016896.">
    <original>E</original>
    <variation>G</variation>
    <location>
        <position position="624"/>
    </location>
</feature>
<feature type="sequence variant" id="VAR_027398" description="In dbSNP:rs7251798.">
    <original>V</original>
    <variation>L</variation>
    <location>
        <position position="839"/>
    </location>
</feature>
<feature type="sequence variant" id="VAR_052726" description="In dbSNP:rs35851866." evidence="8">
    <original>N</original>
    <variation>S</variation>
    <location>
        <position position="947"/>
    </location>
</feature>
<feature type="sequence variant" id="VAR_027399" description="In dbSNP:rs10412932.">
    <original>D</original>
    <variation>G</variation>
    <location>
        <position position="983"/>
    </location>
</feature>
<feature type="sequence variant" id="VAR_052727" description="In dbSNP:rs34831553.">
    <original>A</original>
    <variation>V</variation>
    <location>
        <position position="1456"/>
    </location>
</feature>
<feature type="sequence variant" id="VAR_052728" description="In dbSNP:rs34051133.">
    <original>R</original>
    <variation>H</variation>
    <location>
        <position position="1576"/>
    </location>
</feature>
<feature type="sequence variant" id="VAR_027400" description="In dbSNP:rs34051133." evidence="7">
    <original>R</original>
    <variation>L</variation>
    <location>
        <position position="1576"/>
    </location>
</feature>
<feature type="sequence conflict" description="In Ref. 7; BAB85588." evidence="14" ref="7">
    <original>SH</original>
    <variation>PP</variation>
    <location>
        <begin position="310"/>
        <end position="311"/>
    </location>
</feature>
<feature type="sequence conflict" description="In Ref. 2; BAG58536." evidence="14" ref="2">
    <original>F</original>
    <variation>L</variation>
    <location>
        <position position="439"/>
    </location>
</feature>
<feature type="sequence conflict" description="In Ref. 7; BAB85588." evidence="14" ref="7">
    <original>K</original>
    <variation>I</variation>
    <location>
        <position position="677"/>
    </location>
</feature>
<feature type="sequence conflict" description="In Ref. 7; BAB85588." evidence="14" ref="7">
    <original>G</original>
    <variation>A</variation>
    <location>
        <position position="690"/>
    </location>
</feature>
<feature type="sequence conflict" description="In Ref. 7; BAB85588." evidence="14" ref="7">
    <original>F</original>
    <variation>V</variation>
    <location>
        <position position="750"/>
    </location>
</feature>
<feature type="sequence conflict" description="In Ref. 7; BAB85588." evidence="14" ref="7">
    <original>N</original>
    <variation>Y</variation>
    <location>
        <position position="755"/>
    </location>
</feature>
<feature type="sequence conflict" description="In Ref. 7; BAB85588." evidence="14" ref="7">
    <original>V</original>
    <variation>M</variation>
    <location>
        <position position="1117"/>
    </location>
</feature>
<feature type="sequence conflict" description="In Ref. 7; BAB85588." evidence="14" ref="7">
    <original>I</original>
    <variation>V</variation>
    <location>
        <position position="1145"/>
    </location>
</feature>
<feature type="sequence conflict" description="In Ref. 7; BAB85588." evidence="14" ref="7">
    <original>T</original>
    <variation>M</variation>
    <location>
        <position position="1587"/>
    </location>
</feature>
<feature type="helix" evidence="15">
    <location>
        <begin position="42"/>
        <end position="51"/>
    </location>
</feature>
<feature type="turn" evidence="15">
    <location>
        <begin position="56"/>
        <end position="58"/>
    </location>
</feature>
<feature type="helix" evidence="15">
    <location>
        <begin position="60"/>
        <end position="75"/>
    </location>
</feature>
<feature type="helix" evidence="15">
    <location>
        <begin position="77"/>
        <end position="79"/>
    </location>
</feature>
<feature type="helix" evidence="15">
    <location>
        <begin position="82"/>
        <end position="97"/>
    </location>
</feature>
<feature type="helix" evidence="15">
    <location>
        <begin position="100"/>
        <end position="102"/>
    </location>
</feature>
<feature type="helix" evidence="15">
    <location>
        <begin position="103"/>
        <end position="109"/>
    </location>
</feature>
<feature type="helix" evidence="15">
    <location>
        <begin position="114"/>
        <end position="121"/>
    </location>
</feature>
<feature type="turn" evidence="15">
    <location>
        <begin position="122"/>
        <end position="124"/>
    </location>
</feature>
<keyword id="KW-0002">3D-structure</keyword>
<keyword id="KW-0025">Alternative splicing</keyword>
<keyword id="KW-0053">Apoptosis</keyword>
<keyword id="KW-0963">Cytoplasm</keyword>
<keyword id="KW-0479">Metal-binding</keyword>
<keyword id="KW-0539">Nucleus</keyword>
<keyword id="KW-1267">Proteomics identification</keyword>
<keyword id="KW-1185">Reference proteome</keyword>
<keyword id="KW-0677">Repeat</keyword>
<keyword id="KW-0862">Zinc</keyword>
<keyword id="KW-0863">Zinc-finger</keyword>
<accession>Q9GZU2</accession>
<accession>A7E2B8</accession>
<accession>B4DIM4</accession>
<accession>C9JP50</accession>
<accession>P78418</accession>
<accession>Q5H9P9</accession>
<accession>Q7Z7H7</accession>
<accession>Q8TF75</accession>
<accession>Q9GZY2</accession>
<sequence length="1588" mass="180827">MLPPKHLSATKPKKSWAPNLYELDSDLTKEPDVIIGEGPTDSEFFHQRFRNLIYVEFVGPRKTLIKLRNLCLDWLQPETRTKEEIIELLVLEQYLTIIPEKLKPWVRAKKPENCEKLVTLLENYKEMYQPEDDNNSDVTSDDDMTRNRRESSPPHSVHSFSDRDWDRRGRSRDMEPRDRWSHTRNPRSRMPPRDLSLPVVAKTSFEMDREDDRDSRAYESRSQDAESYQNVVDLAEDRKPHNTIQDNMENYRKLLSLVQLAEDDGHSHMTQGHSSRSKRSAYPSTSRGLKTMPEAKKSTHRRGICEDESSHGVIMEKFIKDVSRSSKSGRARESSDRSQRFPRMSDDNWKDISLNKRESVIQQRVYEGNAFRGGFRFNSTLVSRKRVLERKRRYHFDTDGKGSIHDQKGCPRKKPFECGSEMRKAMSVSSLSSLSSPSFTESQPIDFGAMPYVCDECGRSFSVISEFVEHQIMHTRENLYEYGESFIHSVAVSEVQKSQVGGKRFECKDCGETFNKSAALAEHRKIHARGYLVECKNQECEEAFMPSPTFSELQKIYGKDKFYECRVCKETFLHSSALIEHQKIHFGDDKDNEREHERERERERGETFRPSPALNEFQKMYGKEKMYECKVCGETFLHSSSLKEHQKIHTRGNPFENKGKVCEETFIPGQSLKRRQKTYNKEKLCDFTDGRDAFMQSSELSEHQKIHSRKNLFEGRGYEKSVIHSGPFTESQKSHTITRPLESDEDEKAFTISSNPYENQKIPTKENVYEAKSYERSVIHSLASVEAQKSHSVAGPSKPKVMAESTIQSFDAINHQRVRAGGNTSEGREYSRSVIHSLVASKPPRSHNGNELVESNEKGESSIYISDLNDKRQKIPARENPCEGGSKNRNYEDSVIQSVFRAKPQKSVPGEGSGEFKKDGEFSVPSSNVREYQKARAKKKYIEHRSNETSVIHSLPFGEQTFRPRGMLYECQECGECFAHSSDLTEHQKIHDREKPSGSRNYEWSVIRSLAPTDPQTSYAQEQYAKEQARNKCKDFRQFFATSEDLNTNQKIYDQEKSHGEESQGENTDGEETHSEETHGQETIEDPVIQGSDMEDPQKDDPDDKIYECEDCGLGFVDLTDLTDHQKVHSRKCLVDSREYTHSVIHTHSISEYQRDYTGEQLYECPKCGESFIHSSFLFEHQRIHEQDQLYSMKGCDDGFIALLPMKPRRNRAAERNPALAGSAIRCLLCGQGFIHSSALNEHMRLHREDDLLEQSQMAEEAIIPGLALTEFQRSQTEERLFECAVCGESFVNPAELADHVTVHKNEPYEYGSSYTHTSFLTEPLKGAIPFYECKDCGKSFIHSTVLTKHKELHLEEEEEDEAAAAAAAAAQEVEANVHVPQVVLRIQGLNVEAAEPEVEAAEPEVEAAEPEVEAAEPNGEAEGPDGEAAEPIGEAGQPNGEAEQPNGDADEPDGAGIEDPEERAEEPEGKAEEPEGDADEPDGVGIEDPEEGEDQEIQVEEPYYDCHECTETFTSSTAFSEHLKTHASMIIFEPANAFGECSGYIERASTSTGGANQADEKYFKCDVCGQLFNDRLSLARHQNTHTG</sequence>
<name>PEG3_HUMAN</name>
<proteinExistence type="evidence at protein level"/>
<protein>
    <recommendedName>
        <fullName>Paternally-expressed gene 3 protein</fullName>
    </recommendedName>
    <alternativeName>
        <fullName>Zinc finger and SCAN domain-containing protein 24</fullName>
    </alternativeName>
</protein>
<reference key="1">
    <citation type="journal article" date="2001" name="J. Soc. Gynecol. Invest.">
        <title>The human homologue (PEG3) of the mouse paternally expressed gene 3 (Peg3) is maternally imprinted but not mutated in women with familial recurrent hydatidiform molar pregnancies.</title>
        <authorList>
            <person name="Van den Veyver I.B."/>
            <person name="Norman B."/>
            <person name="Tran C.Q."/>
            <person name="Bourjac J."/>
            <person name="Slim R."/>
        </authorList>
    </citation>
    <scope>NUCLEOTIDE SEQUENCE [MRNA] (ISOFORMS 1 AND 2)</scope>
    <scope>VARIANT LEU-1576</scope>
    <source>
        <tissue>Fetal kidney</tissue>
    </source>
</reference>
<reference key="2">
    <citation type="journal article" date="2004" name="Nat. Genet.">
        <title>Complete sequencing and characterization of 21,243 full-length human cDNAs.</title>
        <authorList>
            <person name="Ota T."/>
            <person name="Suzuki Y."/>
            <person name="Nishikawa T."/>
            <person name="Otsuki T."/>
            <person name="Sugiyama T."/>
            <person name="Irie R."/>
            <person name="Wakamatsu A."/>
            <person name="Hayashi K."/>
            <person name="Sato H."/>
            <person name="Nagai K."/>
            <person name="Kimura K."/>
            <person name="Makita H."/>
            <person name="Sekine M."/>
            <person name="Obayashi M."/>
            <person name="Nishi T."/>
            <person name="Shibahara T."/>
            <person name="Tanaka T."/>
            <person name="Ishii S."/>
            <person name="Yamamoto J."/>
            <person name="Saito K."/>
            <person name="Kawai Y."/>
            <person name="Isono Y."/>
            <person name="Nakamura Y."/>
            <person name="Nagahari K."/>
            <person name="Murakami K."/>
            <person name="Yasuda T."/>
            <person name="Iwayanagi T."/>
            <person name="Wagatsuma M."/>
            <person name="Shiratori A."/>
            <person name="Sudo H."/>
            <person name="Hosoiri T."/>
            <person name="Kaku Y."/>
            <person name="Kodaira H."/>
            <person name="Kondo H."/>
            <person name="Sugawara M."/>
            <person name="Takahashi M."/>
            <person name="Kanda K."/>
            <person name="Yokoi T."/>
            <person name="Furuya T."/>
            <person name="Kikkawa E."/>
            <person name="Omura Y."/>
            <person name="Abe K."/>
            <person name="Kamihara K."/>
            <person name="Katsuta N."/>
            <person name="Sato K."/>
            <person name="Tanikawa M."/>
            <person name="Yamazaki M."/>
            <person name="Ninomiya K."/>
            <person name="Ishibashi T."/>
            <person name="Yamashita H."/>
            <person name="Murakawa K."/>
            <person name="Fujimori K."/>
            <person name="Tanai H."/>
            <person name="Kimata M."/>
            <person name="Watanabe M."/>
            <person name="Hiraoka S."/>
            <person name="Chiba Y."/>
            <person name="Ishida S."/>
            <person name="Ono Y."/>
            <person name="Takiguchi S."/>
            <person name="Watanabe S."/>
            <person name="Yosida M."/>
            <person name="Hotuta T."/>
            <person name="Kusano J."/>
            <person name="Kanehori K."/>
            <person name="Takahashi-Fujii A."/>
            <person name="Hara H."/>
            <person name="Tanase T.-O."/>
            <person name="Nomura Y."/>
            <person name="Togiya S."/>
            <person name="Komai F."/>
            <person name="Hara R."/>
            <person name="Takeuchi K."/>
            <person name="Arita M."/>
            <person name="Imose N."/>
            <person name="Musashino K."/>
            <person name="Yuuki H."/>
            <person name="Oshima A."/>
            <person name="Sasaki N."/>
            <person name="Aotsuka S."/>
            <person name="Yoshikawa Y."/>
            <person name="Matsunawa H."/>
            <person name="Ichihara T."/>
            <person name="Shiohata N."/>
            <person name="Sano S."/>
            <person name="Moriya S."/>
            <person name="Momiyama H."/>
            <person name="Satoh N."/>
            <person name="Takami S."/>
            <person name="Terashima Y."/>
            <person name="Suzuki O."/>
            <person name="Nakagawa S."/>
            <person name="Senoh A."/>
            <person name="Mizoguchi H."/>
            <person name="Goto Y."/>
            <person name="Shimizu F."/>
            <person name="Wakebe H."/>
            <person name="Hishigaki H."/>
            <person name="Watanabe T."/>
            <person name="Sugiyama A."/>
            <person name="Takemoto M."/>
            <person name="Kawakami B."/>
            <person name="Yamazaki M."/>
            <person name="Watanabe K."/>
            <person name="Kumagai A."/>
            <person name="Itakura S."/>
            <person name="Fukuzumi Y."/>
            <person name="Fujimori Y."/>
            <person name="Komiyama M."/>
            <person name="Tashiro H."/>
            <person name="Tanigami A."/>
            <person name="Fujiwara T."/>
            <person name="Ono T."/>
            <person name="Yamada K."/>
            <person name="Fujii Y."/>
            <person name="Ozaki K."/>
            <person name="Hirao M."/>
            <person name="Ohmori Y."/>
            <person name="Kawabata A."/>
            <person name="Hikiji T."/>
            <person name="Kobatake N."/>
            <person name="Inagaki H."/>
            <person name="Ikema Y."/>
            <person name="Okamoto S."/>
            <person name="Okitani R."/>
            <person name="Kawakami T."/>
            <person name="Noguchi S."/>
            <person name="Itoh T."/>
            <person name="Shigeta K."/>
            <person name="Senba T."/>
            <person name="Matsumura K."/>
            <person name="Nakajima Y."/>
            <person name="Mizuno T."/>
            <person name="Morinaga M."/>
            <person name="Sasaki M."/>
            <person name="Togashi T."/>
            <person name="Oyama M."/>
            <person name="Hata H."/>
            <person name="Watanabe M."/>
            <person name="Komatsu T."/>
            <person name="Mizushima-Sugano J."/>
            <person name="Satoh T."/>
            <person name="Shirai Y."/>
            <person name="Takahashi Y."/>
            <person name="Nakagawa K."/>
            <person name="Okumura K."/>
            <person name="Nagase T."/>
            <person name="Nomura N."/>
            <person name="Kikuchi H."/>
            <person name="Masuho Y."/>
            <person name="Yamashita R."/>
            <person name="Nakai K."/>
            <person name="Yada T."/>
            <person name="Nakamura Y."/>
            <person name="Ohara O."/>
            <person name="Isogai T."/>
            <person name="Sugano S."/>
        </authorList>
    </citation>
    <scope>NUCLEOTIDE SEQUENCE [LARGE SCALE MRNA] (ISOFORM 4)</scope>
    <source>
        <tissue>Hippocampus</tissue>
    </source>
</reference>
<reference key="3">
    <citation type="submission" date="2005-07" db="EMBL/GenBank/DDBJ databases">
        <authorList>
            <person name="Mural R.J."/>
            <person name="Istrail S."/>
            <person name="Sutton G."/>
            <person name="Florea L."/>
            <person name="Halpern A.L."/>
            <person name="Mobarry C.M."/>
            <person name="Lippert R."/>
            <person name="Walenz B."/>
            <person name="Shatkay H."/>
            <person name="Dew I."/>
            <person name="Miller J.R."/>
            <person name="Flanigan M.J."/>
            <person name="Edwards N.J."/>
            <person name="Bolanos R."/>
            <person name="Fasulo D."/>
            <person name="Halldorsson B.V."/>
            <person name="Hannenhalli S."/>
            <person name="Turner R."/>
            <person name="Yooseph S."/>
            <person name="Lu F."/>
            <person name="Nusskern D.R."/>
            <person name="Shue B.C."/>
            <person name="Zheng X.H."/>
            <person name="Zhong F."/>
            <person name="Delcher A.L."/>
            <person name="Huson D.H."/>
            <person name="Kravitz S.A."/>
            <person name="Mouchard L."/>
            <person name="Reinert K."/>
            <person name="Remington K.A."/>
            <person name="Clark A.G."/>
            <person name="Waterman M.S."/>
            <person name="Eichler E.E."/>
            <person name="Adams M.D."/>
            <person name="Hunkapiller M.W."/>
            <person name="Myers E.W."/>
            <person name="Venter J.C."/>
        </authorList>
    </citation>
    <scope>NUCLEOTIDE SEQUENCE [LARGE SCALE GENOMIC DNA]</scope>
</reference>
<reference key="4">
    <citation type="journal article" date="2004" name="Genome Res.">
        <title>The status, quality, and expansion of the NIH full-length cDNA project: the Mammalian Gene Collection (MGC).</title>
        <authorList>
            <consortium name="The MGC Project Team"/>
        </authorList>
    </citation>
    <scope>NUCLEOTIDE SEQUENCE [LARGE SCALE MRNA] (ISOFORM 4)</scope>
    <scope>NUCLEOTIDE SEQUENCE [LARGE SCALE MRNA] OF 4-1588 (ISOFORM 3)</scope>
    <scope>VARIANT SER-947</scope>
    <source>
        <tissue>Liver</tissue>
    </source>
</reference>
<reference key="5">
    <citation type="journal article" date="2001" name="Hum. Mol. Genet.">
        <title>Paternal monoallelic expression of PEG3 in the human placenta.</title>
        <authorList>
            <person name="Hiby S.E."/>
            <person name="Lough M."/>
            <person name="Keverne E.B."/>
            <person name="Surani M.A."/>
            <person name="Loke Y.W."/>
            <person name="King A."/>
        </authorList>
    </citation>
    <scope>NUCLEOTIDE SEQUENCE [MRNA] OF 127-456</scope>
    <scope>TISSUE SPECIFICITY</scope>
</reference>
<reference key="6">
    <citation type="journal article" date="2007" name="BMC Genomics">
        <title>The full-ORF clone resource of the German cDNA consortium.</title>
        <authorList>
            <person name="Bechtel S."/>
            <person name="Rosenfelder H."/>
            <person name="Duda A."/>
            <person name="Schmidt C.P."/>
            <person name="Ernst U."/>
            <person name="Wellenreuther R."/>
            <person name="Mehrle A."/>
            <person name="Schuster C."/>
            <person name="Bahr A."/>
            <person name="Bloecker H."/>
            <person name="Heubner D."/>
            <person name="Hoerlein A."/>
            <person name="Michel G."/>
            <person name="Wedler H."/>
            <person name="Koehrer K."/>
            <person name="Ottenwaelder B."/>
            <person name="Poustka A."/>
            <person name="Wiemann S."/>
            <person name="Schupp I."/>
        </authorList>
    </citation>
    <scope>NUCLEOTIDE SEQUENCE [LARGE SCALE MRNA] OF 781-1588</scope>
    <source>
        <tissue>Amygdala</tissue>
    </source>
</reference>
<reference key="7">
    <citation type="journal article" date="2001" name="Genes Cells">
        <title>Tumour suppressor activity of human imprinted gene PEG3 in a glioma cell line.</title>
        <authorList>
            <person name="Kohda T."/>
            <person name="Asai A."/>
            <person name="Kuroiwa Y."/>
            <person name="Kobayashi S."/>
            <person name="Aisaka K."/>
            <person name="Nagashima G."/>
            <person name="Yoshida M.C."/>
            <person name="Kondo Y."/>
            <person name="Kagiyama N."/>
            <person name="Kirino T."/>
            <person name="Kaneko-Ishino T."/>
            <person name="Ishino F."/>
        </authorList>
    </citation>
    <scope>NUCLEOTIDE SEQUENCE [MRNA] OF 302-1588 (ISOFORM 1)</scope>
    <scope>FUNCTION</scope>
    <scope>TISSUE SPECIFICITY</scope>
</reference>
<reference key="8">
    <citation type="journal article" date="1997" name="Genome Res.">
        <title>The human homolog of a mouse-imprinted gene, Peg3, maps to a zinc finger gene-rich region of human chromosome 19q13.4.</title>
        <authorList>
            <person name="Kim J."/>
            <person name="Ashworth L."/>
            <person name="Branscomb E."/>
            <person name="Stubbs L."/>
        </authorList>
    </citation>
    <scope>NUCLEOTIDE SEQUENCE [MRNA] OF 974-1588</scope>
    <scope>TISSUE SPECIFICITY</scope>
</reference>
<reference key="9">
    <citation type="submission" date="1998-12" db="EMBL/GenBank/DDBJ databases">
        <title>Sequence analysis of a 2 Mb region containing a zinc finger (ZNF) gene cluster in 19q13.4.</title>
        <authorList>
            <person name="Lamerdin J.E."/>
            <person name="McCready P.M."/>
            <person name="Kim J."/>
            <person name="Skowronski E."/>
            <person name="Viswanathan V."/>
            <person name="Burkhart-Schultz K."/>
            <person name="Gordon L."/>
            <person name="Dias J."/>
            <person name="Ramirez M."/>
            <person name="Stilwagen S."/>
            <person name="Phan H."/>
            <person name="Velasco N."/>
            <person name="Do L."/>
            <person name="Regala W."/>
            <person name="Terry A."/>
            <person name="Garnes J."/>
            <person name="Danganan L."/>
            <person name="Erler A."/>
            <person name="Christensen M."/>
            <person name="Georgescu A."/>
            <person name="Avila J."/>
            <person name="Liu S."/>
            <person name="Attix C."/>
            <person name="Andreise T."/>
            <person name="Trankheim M."/>
            <person name="Amico-Keller G."/>
            <person name="Coefield J."/>
            <person name="Duarte S."/>
            <person name="Lucas S."/>
            <person name="Bruce R."/>
            <person name="Thomas P."/>
            <person name="Quan G."/>
            <person name="Kronmiller B."/>
            <person name="Arellano A."/>
            <person name="Saunders C."/>
            <person name="Ow D."/>
            <person name="Nolan M."/>
            <person name="Trong S."/>
            <person name="Kobayashi A."/>
            <person name="Olsen A.S."/>
            <person name="Carrano A.V."/>
        </authorList>
    </citation>
    <scope>NUCLEOTIDE SEQUENCE [LARGE SCALE GENOMIC DNA] OF 974-1588</scope>
</reference>
<reference key="10">
    <citation type="journal article" date="2011" name="BMC Syst. Biol.">
        <title>Initial characterization of the human central proteome.</title>
        <authorList>
            <person name="Burkard T.R."/>
            <person name="Planyavsky M."/>
            <person name="Kaupe I."/>
            <person name="Breitwieser F.P."/>
            <person name="Buerckstuemmer T."/>
            <person name="Bennett K.L."/>
            <person name="Superti-Furga G."/>
            <person name="Colinge J."/>
        </authorList>
    </citation>
    <scope>IDENTIFICATION BY MASS SPECTROMETRY [LARGE SCALE ANALYSIS]</scope>
</reference>
<reference key="11">
    <citation type="journal article" date="2013" name="PLoS ONE">
        <title>Structure of the SCAN domain of human paternally expressed gene 3 protein.</title>
        <authorList>
            <person name="Rimsa V."/>
            <person name="Eadsforth T.C."/>
            <person name="Hunter W.N."/>
        </authorList>
    </citation>
    <scope>X-RAY CRYSTALLOGRAPHY (1.95 ANGSTROMS) OF 40-130</scope>
    <scope>SCAN DOMAIN</scope>
    <scope>SUBUNIT</scope>
</reference>
<reference key="12">
    <citation type="journal article" date="2006" name="Science">
        <title>The consensus coding sequences of human breast and colorectal cancers.</title>
        <authorList>
            <person name="Sjoeblom T."/>
            <person name="Jones S."/>
            <person name="Wood L.D."/>
            <person name="Parsons D.W."/>
            <person name="Lin J."/>
            <person name="Barber T.D."/>
            <person name="Mandelker D."/>
            <person name="Leary R.J."/>
            <person name="Ptak J."/>
            <person name="Silliman N."/>
            <person name="Szabo S."/>
            <person name="Buckhaults P."/>
            <person name="Farrell C."/>
            <person name="Meeh P."/>
            <person name="Markowitz S.D."/>
            <person name="Willis J."/>
            <person name="Dawson D."/>
            <person name="Willson J.K.V."/>
            <person name="Gazdar A.F."/>
            <person name="Hartigan J."/>
            <person name="Wu L."/>
            <person name="Liu C."/>
            <person name="Parmigiani G."/>
            <person name="Park B.H."/>
            <person name="Bachman K.E."/>
            <person name="Papadopoulos N."/>
            <person name="Vogelstein B."/>
            <person name="Kinzler K.W."/>
            <person name="Velculescu V.E."/>
        </authorList>
    </citation>
    <scope>VARIANT [LARGE SCALE ANALYSIS] HIS-594</scope>
</reference>
<dbReference type="EMBL" id="AF208980">
    <property type="protein sequence ID" value="AAG42324.1"/>
    <property type="molecule type" value="Genomic_DNA"/>
</dbReference>
<dbReference type="EMBL" id="AF208974">
    <property type="protein sequence ID" value="AAG42324.1"/>
    <property type="status" value="JOINED"/>
    <property type="molecule type" value="Genomic_DNA"/>
</dbReference>
<dbReference type="EMBL" id="AF208975">
    <property type="protein sequence ID" value="AAG42324.1"/>
    <property type="status" value="JOINED"/>
    <property type="molecule type" value="Genomic_DNA"/>
</dbReference>
<dbReference type="EMBL" id="AF208976">
    <property type="protein sequence ID" value="AAG42324.1"/>
    <property type="status" value="JOINED"/>
    <property type="molecule type" value="Genomic_DNA"/>
</dbReference>
<dbReference type="EMBL" id="AF208977">
    <property type="protein sequence ID" value="AAG42324.1"/>
    <property type="status" value="JOINED"/>
    <property type="molecule type" value="Genomic_DNA"/>
</dbReference>
<dbReference type="EMBL" id="AF208978">
    <property type="protein sequence ID" value="AAG42324.1"/>
    <property type="status" value="JOINED"/>
    <property type="molecule type" value="Genomic_DNA"/>
</dbReference>
<dbReference type="EMBL" id="AF208979">
    <property type="protein sequence ID" value="AAG42324.1"/>
    <property type="status" value="JOINED"/>
    <property type="molecule type" value="Genomic_DNA"/>
</dbReference>
<dbReference type="EMBL" id="AF208980">
    <property type="protein sequence ID" value="AAG42325.1"/>
    <property type="molecule type" value="Genomic_DNA"/>
</dbReference>
<dbReference type="EMBL" id="AF208974">
    <property type="protein sequence ID" value="AAG42325.1"/>
    <property type="status" value="JOINED"/>
    <property type="molecule type" value="Genomic_DNA"/>
</dbReference>
<dbReference type="EMBL" id="AF208975">
    <property type="protein sequence ID" value="AAG42325.1"/>
    <property type="status" value="JOINED"/>
    <property type="molecule type" value="Genomic_DNA"/>
</dbReference>
<dbReference type="EMBL" id="AF208976">
    <property type="protein sequence ID" value="AAG42325.1"/>
    <property type="status" value="JOINED"/>
    <property type="molecule type" value="Genomic_DNA"/>
</dbReference>
<dbReference type="EMBL" id="AF208977">
    <property type="protein sequence ID" value="AAG42325.1"/>
    <property type="status" value="JOINED"/>
    <property type="molecule type" value="Genomic_DNA"/>
</dbReference>
<dbReference type="EMBL" id="AF208978">
    <property type="protein sequence ID" value="AAG42325.1"/>
    <property type="status" value="JOINED"/>
    <property type="molecule type" value="Genomic_DNA"/>
</dbReference>
<dbReference type="EMBL" id="AF208979">
    <property type="protein sequence ID" value="AAG42325.1"/>
    <property type="status" value="JOINED"/>
    <property type="molecule type" value="Genomic_DNA"/>
</dbReference>
<dbReference type="EMBL" id="AF208967">
    <property type="protein sequence ID" value="AAG35739.1"/>
    <property type="molecule type" value="mRNA"/>
</dbReference>
<dbReference type="EMBL" id="AF208968">
    <property type="protein sequence ID" value="AAG35740.1"/>
    <property type="molecule type" value="mRNA"/>
</dbReference>
<dbReference type="EMBL" id="AF208969">
    <property type="protein sequence ID" value="AAG35741.1"/>
    <property type="molecule type" value="mRNA"/>
</dbReference>
<dbReference type="EMBL" id="AF208970">
    <property type="protein sequence ID" value="AAG35742.1"/>
    <property type="molecule type" value="mRNA"/>
</dbReference>
<dbReference type="EMBL" id="AK295679">
    <property type="protein sequence ID" value="BAG58536.1"/>
    <property type="molecule type" value="mRNA"/>
</dbReference>
<dbReference type="EMBL" id="CH471135">
    <property type="protein sequence ID" value="EAW72474.1"/>
    <property type="molecule type" value="Genomic_DNA"/>
</dbReference>
<dbReference type="EMBL" id="BC052616">
    <property type="protein sequence ID" value="AAH52616.1"/>
    <property type="molecule type" value="mRNA"/>
</dbReference>
<dbReference type="EMBL" id="BC150272">
    <property type="protein sequence ID" value="AAI50273.1"/>
    <property type="molecule type" value="mRNA"/>
</dbReference>
<dbReference type="EMBL" id="AB003039">
    <property type="protein sequence ID" value="BAB85588.1"/>
    <property type="status" value="ALT_FRAME"/>
    <property type="molecule type" value="mRNA"/>
</dbReference>
<dbReference type="EMBL" id="CR933682">
    <property type="protein sequence ID" value="CAI45975.1"/>
    <property type="status" value="ALT_INIT"/>
    <property type="molecule type" value="mRNA"/>
</dbReference>
<dbReference type="EMBL" id="U90336">
    <property type="protein sequence ID" value="AAB50011.1"/>
    <property type="molecule type" value="mRNA"/>
</dbReference>
<dbReference type="EMBL" id="AC006115">
    <property type="protein sequence ID" value="AAC83176.1"/>
    <property type="molecule type" value="Genomic_DNA"/>
</dbReference>
<dbReference type="CCDS" id="CCDS12948.1">
    <molecule id="Q9GZU2-1"/>
</dbReference>
<dbReference type="CCDS" id="CCDS58684.1">
    <molecule id="Q9GZU2-4"/>
</dbReference>
<dbReference type="CCDS" id="CCDS58685.1">
    <molecule id="Q9GZU2-2"/>
</dbReference>
<dbReference type="RefSeq" id="NP_001139656.1">
    <molecule id="Q9GZU2-1"/>
    <property type="nucleotide sequence ID" value="NM_001146184.2"/>
</dbReference>
<dbReference type="RefSeq" id="NP_001139657.1">
    <molecule id="Q9GZU2-2"/>
    <property type="nucleotide sequence ID" value="NM_001146185.2"/>
</dbReference>
<dbReference type="RefSeq" id="NP_001139658.1">
    <property type="nucleotide sequence ID" value="NM_001146186.1"/>
</dbReference>
<dbReference type="RefSeq" id="NP_001139659.1">
    <molecule id="Q9GZU2-4"/>
    <property type="nucleotide sequence ID" value="NM_001146187.2"/>
</dbReference>
<dbReference type="RefSeq" id="NP_001356649.1">
    <molecule id="Q9GZU2-4"/>
    <property type="nucleotide sequence ID" value="NM_001369720.1"/>
</dbReference>
<dbReference type="RefSeq" id="NP_001356650.1">
    <molecule id="Q9GZU2-4"/>
    <property type="nucleotide sequence ID" value="NM_001369721.1"/>
</dbReference>
<dbReference type="RefSeq" id="NP_001356651.1">
    <molecule id="Q9GZU2-4"/>
    <property type="nucleotide sequence ID" value="NM_001369722.1"/>
</dbReference>
<dbReference type="RefSeq" id="NP_001356652.1">
    <molecule id="Q9GZU2-4"/>
    <property type="nucleotide sequence ID" value="NM_001369723.1"/>
</dbReference>
<dbReference type="RefSeq" id="NP_001356653.1">
    <molecule id="Q9GZU2-4"/>
    <property type="nucleotide sequence ID" value="NM_001369724.1"/>
</dbReference>
<dbReference type="RefSeq" id="NP_001356654.1">
    <molecule id="Q9GZU2-4"/>
    <property type="nucleotide sequence ID" value="NM_001369725.1"/>
</dbReference>
<dbReference type="RefSeq" id="NP_001356655.1">
    <molecule id="Q9GZU2-4"/>
    <property type="nucleotide sequence ID" value="NM_001369726.1"/>
</dbReference>
<dbReference type="RefSeq" id="NP_001356656.1">
    <molecule id="Q9GZU2-4"/>
    <property type="nucleotide sequence ID" value="NM_001369727.1"/>
</dbReference>
<dbReference type="RefSeq" id="NP_001356657.1">
    <molecule id="Q9GZU2-4"/>
    <property type="nucleotide sequence ID" value="NM_001369728.1"/>
</dbReference>
<dbReference type="RefSeq" id="NP_001356658.1">
    <molecule id="Q9GZU2-4"/>
    <property type="nucleotide sequence ID" value="NM_001369729.1"/>
</dbReference>
<dbReference type="RefSeq" id="NP_001356659.1">
    <molecule id="Q9GZU2-4"/>
    <property type="nucleotide sequence ID" value="NM_001369730.1"/>
</dbReference>
<dbReference type="RefSeq" id="NP_001356660.1">
    <molecule id="Q9GZU2-4"/>
    <property type="nucleotide sequence ID" value="NM_001369731.1"/>
</dbReference>
<dbReference type="RefSeq" id="NP_001356661.1">
    <molecule id="Q9GZU2-4"/>
    <property type="nucleotide sequence ID" value="NM_001369732.1"/>
</dbReference>
<dbReference type="RefSeq" id="NP_001356662.1">
    <molecule id="Q9GZU2-4"/>
    <property type="nucleotide sequence ID" value="NM_001369733.1"/>
</dbReference>
<dbReference type="RefSeq" id="NP_001356668.1">
    <molecule id="Q9GZU2-4"/>
    <property type="nucleotide sequence ID" value="NM_001369739.1"/>
</dbReference>
<dbReference type="RefSeq" id="NP_006201.1">
    <molecule id="Q9GZU2-1"/>
    <property type="nucleotide sequence ID" value="NM_006210.3"/>
</dbReference>
<dbReference type="PDB" id="4BHX">
    <property type="method" value="X-ray"/>
    <property type="resolution" value="1.95 A"/>
    <property type="chains" value="A/B=40-130"/>
</dbReference>
<dbReference type="PDBsum" id="4BHX"/>
<dbReference type="SMR" id="Q9GZU2"/>
<dbReference type="BioGRID" id="111204">
    <property type="interactions" value="13"/>
</dbReference>
<dbReference type="DIP" id="DIP-38426N"/>
<dbReference type="FunCoup" id="Q9GZU2">
    <property type="interactions" value="286"/>
</dbReference>
<dbReference type="IntAct" id="Q9GZU2">
    <property type="interactions" value="6"/>
</dbReference>
<dbReference type="MINT" id="Q9GZU2"/>
<dbReference type="STRING" id="9606.ENSP00000326581"/>
<dbReference type="GlyGen" id="Q9GZU2">
    <property type="glycosylation" value="2 sites, 1 O-linked glycan (1 site)"/>
</dbReference>
<dbReference type="iPTMnet" id="Q9GZU2"/>
<dbReference type="PhosphoSitePlus" id="Q9GZU2"/>
<dbReference type="SwissPalm" id="Q9GZU2"/>
<dbReference type="BioMuta" id="PEG3"/>
<dbReference type="DMDM" id="74762724"/>
<dbReference type="jPOST" id="Q9GZU2"/>
<dbReference type="MassIVE" id="Q9GZU2"/>
<dbReference type="PaxDb" id="9606-ENSP00000326581"/>
<dbReference type="PeptideAtlas" id="Q9GZU2"/>
<dbReference type="ProteomicsDB" id="1789"/>
<dbReference type="ProteomicsDB" id="80145">
    <molecule id="Q9GZU2-1"/>
</dbReference>
<dbReference type="ProteomicsDB" id="80146">
    <molecule id="Q9GZU2-2"/>
</dbReference>
<dbReference type="ProteomicsDB" id="80147">
    <molecule id="Q9GZU2-3"/>
</dbReference>
<dbReference type="Antibodypedia" id="19625">
    <property type="antibodies" value="184 antibodies from 24 providers"/>
</dbReference>
<dbReference type="DNASU" id="5178"/>
<dbReference type="Ensembl" id="ENST00000326441.15">
    <molecule id="Q9GZU2-1"/>
    <property type="protein sequence ID" value="ENSP00000326581.7"/>
    <property type="gene ID" value="ENSG00000198300.14"/>
</dbReference>
<dbReference type="Ensembl" id="ENST00000593695.5">
    <molecule id="Q9GZU2-2"/>
    <property type="protein sequence ID" value="ENSP00000472402.1"/>
    <property type="gene ID" value="ENSG00000198300.14"/>
</dbReference>
<dbReference type="Ensembl" id="ENST00000598410.5">
    <molecule id="Q9GZU2-4"/>
    <property type="protein sequence ID" value="ENSP00000473190.1"/>
    <property type="gene ID" value="ENSG00000198300.14"/>
</dbReference>
<dbReference type="Ensembl" id="ENST00000599534.5">
    <molecule id="Q9GZU2-1"/>
    <property type="protein sequence ID" value="ENSP00000472395.1"/>
    <property type="gene ID" value="ENSG00000198300.14"/>
</dbReference>
<dbReference type="Ensembl" id="ENST00000599577.5">
    <molecule id="Q9GZU2-1"/>
    <property type="protein sequence ID" value="ENSP00000469486.1"/>
    <property type="gene ID" value="ENSG00000198300.14"/>
</dbReference>
<dbReference type="Ensembl" id="ENST00000648694.1">
    <molecule id="Q9GZU2-4"/>
    <property type="protein sequence ID" value="ENSP00000496914.1"/>
    <property type="gene ID" value="ENSG00000198300.14"/>
</dbReference>
<dbReference type="Ensembl" id="ENST00000649233.1">
    <molecule id="Q9GZU2-4"/>
    <property type="protein sequence ID" value="ENSP00000498047.1"/>
    <property type="gene ID" value="ENSG00000198300.14"/>
</dbReference>
<dbReference type="Ensembl" id="ENST00000649428.1">
    <molecule id="Q9GZU2-4"/>
    <property type="protein sequence ID" value="ENSP00000498138.1"/>
    <property type="gene ID" value="ENSG00000198300.14"/>
</dbReference>
<dbReference type="Ensembl" id="ENST00000649680.1">
    <molecule id="Q9GZU2-4"/>
    <property type="protein sequence ID" value="ENSP00000497512.1"/>
    <property type="gene ID" value="ENSG00000198300.14"/>
</dbReference>
<dbReference type="Ensembl" id="ENST00000649876.1">
    <molecule id="Q9GZU2-4"/>
    <property type="protein sequence ID" value="ENSP00000496867.1"/>
    <property type="gene ID" value="ENSG00000198300.14"/>
</dbReference>
<dbReference type="Ensembl" id="ENST00000650102.1">
    <molecule id="Q9GZU2-4"/>
    <property type="protein sequence ID" value="ENSP00000497466.1"/>
    <property type="gene ID" value="ENSG00000198300.14"/>
</dbReference>
<dbReference type="Ensembl" id="ENST00000650632.1">
    <molecule id="Q9GZU2-4"/>
    <property type="protein sequence ID" value="ENSP00000497971.1"/>
    <property type="gene ID" value="ENSG00000198300.14"/>
</dbReference>
<dbReference type="GeneID" id="5178"/>
<dbReference type="KEGG" id="hsa:5178"/>
<dbReference type="MANE-Select" id="ENST00000326441.15">
    <property type="protein sequence ID" value="ENSP00000326581.7"/>
    <property type="RefSeq nucleotide sequence ID" value="NM_006210.3"/>
    <property type="RefSeq protein sequence ID" value="NP_006201.1"/>
</dbReference>
<dbReference type="UCSC" id="uc002qnv.3">
    <molecule id="Q9GZU2-1"/>
    <property type="organism name" value="human"/>
</dbReference>
<dbReference type="AGR" id="HGNC:8826"/>
<dbReference type="CTD" id="5178"/>
<dbReference type="DisGeNET" id="5178"/>
<dbReference type="GeneCards" id="PEG3"/>
<dbReference type="HGNC" id="HGNC:8826">
    <property type="gene designation" value="PEG3"/>
</dbReference>
<dbReference type="HPA" id="ENSG00000198300">
    <property type="expression patterns" value="Tissue enhanced (ovary, placenta)"/>
</dbReference>
<dbReference type="MIM" id="601483">
    <property type="type" value="gene"/>
</dbReference>
<dbReference type="neXtProt" id="NX_Q9GZU2"/>
<dbReference type="OpenTargets" id="ENSG00000198300"/>
<dbReference type="PharmGKB" id="PA33171"/>
<dbReference type="VEuPathDB" id="HostDB:ENSG00000198300"/>
<dbReference type="eggNOG" id="KOG1721">
    <property type="taxonomic scope" value="Eukaryota"/>
</dbReference>
<dbReference type="GeneTree" id="ENSGT00940000162525"/>
<dbReference type="HOGENOM" id="CLU_005305_0_0_1"/>
<dbReference type="InParanoid" id="Q9GZU2"/>
<dbReference type="OMA" id="YGHRRYD"/>
<dbReference type="OrthoDB" id="9531386at2759"/>
<dbReference type="PAN-GO" id="Q9GZU2">
    <property type="GO annotations" value="3 GO annotations based on evolutionary models"/>
</dbReference>
<dbReference type="PhylomeDB" id="Q9GZU2"/>
<dbReference type="TreeFam" id="TF337075"/>
<dbReference type="PathwayCommons" id="Q9GZU2"/>
<dbReference type="SignaLink" id="Q9GZU2"/>
<dbReference type="BioGRID-ORCS" id="5178">
    <property type="hits" value="11 hits in 1121 CRISPR screens"/>
</dbReference>
<dbReference type="EvolutionaryTrace" id="Q9GZU2"/>
<dbReference type="GeneWiki" id="PEG3"/>
<dbReference type="GenomeRNAi" id="5178"/>
<dbReference type="Pharos" id="Q9GZU2">
    <property type="development level" value="Tbio"/>
</dbReference>
<dbReference type="PRO" id="PR:Q9GZU2"/>
<dbReference type="Proteomes" id="UP000005640">
    <property type="component" value="Chromosome 19"/>
</dbReference>
<dbReference type="RNAct" id="Q9GZU2">
    <property type="molecule type" value="protein"/>
</dbReference>
<dbReference type="Bgee" id="ENSG00000198300">
    <property type="expression patterns" value="Expressed in endothelial cell and 204 other cell types or tissues"/>
</dbReference>
<dbReference type="ExpressionAtlas" id="Q9GZU2">
    <property type="expression patterns" value="baseline and differential"/>
</dbReference>
<dbReference type="GO" id="GO:0005776">
    <property type="term" value="C:autophagosome"/>
    <property type="evidence" value="ECO:0000250"/>
    <property type="project" value="UniProtKB"/>
</dbReference>
<dbReference type="GO" id="GO:0005634">
    <property type="term" value="C:nucleus"/>
    <property type="evidence" value="ECO:0000250"/>
    <property type="project" value="UniProtKB"/>
</dbReference>
<dbReference type="GO" id="GO:0000981">
    <property type="term" value="F:DNA-binding transcription factor activity, RNA polymerase II-specific"/>
    <property type="evidence" value="ECO:0000318"/>
    <property type="project" value="GO_Central"/>
</dbReference>
<dbReference type="GO" id="GO:0000977">
    <property type="term" value="F:RNA polymerase II transcription regulatory region sequence-specific DNA binding"/>
    <property type="evidence" value="ECO:0000318"/>
    <property type="project" value="GO_Central"/>
</dbReference>
<dbReference type="GO" id="GO:0008270">
    <property type="term" value="F:zinc ion binding"/>
    <property type="evidence" value="ECO:0007669"/>
    <property type="project" value="UniProtKB-KW"/>
</dbReference>
<dbReference type="GO" id="GO:0006915">
    <property type="term" value="P:apoptotic process"/>
    <property type="evidence" value="ECO:0007669"/>
    <property type="project" value="UniProtKB-KW"/>
</dbReference>
<dbReference type="GO" id="GO:0000122">
    <property type="term" value="P:negative regulation of transcription by RNA polymerase II"/>
    <property type="evidence" value="ECO:0000250"/>
    <property type="project" value="UniProtKB"/>
</dbReference>
<dbReference type="GO" id="GO:0045944">
    <property type="term" value="P:positive regulation of transcription by RNA polymerase II"/>
    <property type="evidence" value="ECO:0000250"/>
    <property type="project" value="UniProtKB"/>
</dbReference>
<dbReference type="GO" id="GO:0010468">
    <property type="term" value="P:regulation of gene expression"/>
    <property type="evidence" value="ECO:0000250"/>
    <property type="project" value="UniProtKB"/>
</dbReference>
<dbReference type="GO" id="GO:0006357">
    <property type="term" value="P:regulation of transcription by RNA polymerase II"/>
    <property type="evidence" value="ECO:0000318"/>
    <property type="project" value="GO_Central"/>
</dbReference>
<dbReference type="CDD" id="cd07936">
    <property type="entry name" value="SCAN"/>
    <property type="match status" value="1"/>
</dbReference>
<dbReference type="FunFam" id="3.30.160.60:FF:002668">
    <property type="entry name" value="Paternally expressed 3"/>
    <property type="match status" value="1"/>
</dbReference>
<dbReference type="FunFam" id="3.30.160.60:FF:001889">
    <property type="entry name" value="Paternally-expressed gene 3 protein"/>
    <property type="match status" value="1"/>
</dbReference>
<dbReference type="FunFam" id="3.30.160.60:FF:002011">
    <property type="entry name" value="Paternally-expressed gene 3 protein"/>
    <property type="match status" value="1"/>
</dbReference>
<dbReference type="FunFam" id="3.30.160.60:FF:002100">
    <property type="entry name" value="Paternally-expressed gene 3 protein"/>
    <property type="match status" value="1"/>
</dbReference>
<dbReference type="FunFam" id="3.30.160.60:FF:003286">
    <property type="entry name" value="Paternally-expressed gene 3 protein"/>
    <property type="match status" value="1"/>
</dbReference>
<dbReference type="FunFam" id="3.30.160.60:FF:001328">
    <property type="entry name" value="paternally-expressed gene 3 protein"/>
    <property type="match status" value="2"/>
</dbReference>
<dbReference type="FunFam" id="3.30.160.60:FF:001757">
    <property type="entry name" value="paternally-expressed gene 3 protein isoform X1"/>
    <property type="match status" value="1"/>
</dbReference>
<dbReference type="FunFam" id="3.30.160.60:FF:000661">
    <property type="entry name" value="paternally-expressed gene 3 protein-like"/>
    <property type="match status" value="1"/>
</dbReference>
<dbReference type="FunFam" id="1.10.4020.10:FF:000001">
    <property type="entry name" value="zinc finger protein 263 isoform X1"/>
    <property type="match status" value="1"/>
</dbReference>
<dbReference type="Gene3D" id="3.30.160.60">
    <property type="entry name" value="Classic Zinc Finger"/>
    <property type="match status" value="10"/>
</dbReference>
<dbReference type="Gene3D" id="1.10.4020.10">
    <property type="entry name" value="DNA breaking-rejoining enzymes"/>
    <property type="match status" value="1"/>
</dbReference>
<dbReference type="InterPro" id="IPR050826">
    <property type="entry name" value="Krueppel_C2H2_ZnFinger"/>
</dbReference>
<dbReference type="InterPro" id="IPR003309">
    <property type="entry name" value="SCAN_dom"/>
</dbReference>
<dbReference type="InterPro" id="IPR038269">
    <property type="entry name" value="SCAN_sf"/>
</dbReference>
<dbReference type="InterPro" id="IPR036236">
    <property type="entry name" value="Znf_C2H2_sf"/>
</dbReference>
<dbReference type="InterPro" id="IPR013087">
    <property type="entry name" value="Znf_C2H2_type"/>
</dbReference>
<dbReference type="PANTHER" id="PTHR24377">
    <property type="entry name" value="IP01015P-RELATED"/>
    <property type="match status" value="1"/>
</dbReference>
<dbReference type="Pfam" id="PF02023">
    <property type="entry name" value="SCAN"/>
    <property type="match status" value="1"/>
</dbReference>
<dbReference type="Pfam" id="PF00096">
    <property type="entry name" value="zf-C2H2"/>
    <property type="match status" value="11"/>
</dbReference>
<dbReference type="SMART" id="SM00431">
    <property type="entry name" value="SCAN"/>
    <property type="match status" value="1"/>
</dbReference>
<dbReference type="SMART" id="SM00355">
    <property type="entry name" value="ZnF_C2H2"/>
    <property type="match status" value="12"/>
</dbReference>
<dbReference type="SUPFAM" id="SSF57667">
    <property type="entry name" value="beta-beta-alpha zinc fingers"/>
    <property type="match status" value="9"/>
</dbReference>
<dbReference type="SUPFAM" id="SSF47353">
    <property type="entry name" value="Retrovirus capsid dimerization domain-like"/>
    <property type="match status" value="1"/>
</dbReference>
<dbReference type="PROSITE" id="PS50804">
    <property type="entry name" value="SCAN_BOX"/>
    <property type="match status" value="1"/>
</dbReference>
<dbReference type="PROSITE" id="PS00028">
    <property type="entry name" value="ZINC_FINGER_C2H2_1"/>
    <property type="match status" value="12"/>
</dbReference>
<dbReference type="PROSITE" id="PS50157">
    <property type="entry name" value="ZINC_FINGER_C2H2_2"/>
    <property type="match status" value="12"/>
</dbReference>
<evidence type="ECO:0000250" key="1"/>
<evidence type="ECO:0000255" key="2">
    <source>
        <dbReference type="PROSITE-ProRule" id="PRU00042"/>
    </source>
</evidence>
<evidence type="ECO:0000255" key="3">
    <source>
        <dbReference type="PROSITE-ProRule" id="PRU00187"/>
    </source>
</evidence>
<evidence type="ECO:0000256" key="4">
    <source>
        <dbReference type="SAM" id="MobiDB-lite"/>
    </source>
</evidence>
<evidence type="ECO:0000269" key="5">
    <source>
    </source>
</evidence>
<evidence type="ECO:0000269" key="6">
    <source>
    </source>
</evidence>
<evidence type="ECO:0000269" key="7">
    <source>
    </source>
</evidence>
<evidence type="ECO:0000269" key="8">
    <source>
    </source>
</evidence>
<evidence type="ECO:0000269" key="9">
    <source>
    </source>
</evidence>
<evidence type="ECO:0000269" key="10">
    <source>
    </source>
</evidence>
<evidence type="ECO:0000303" key="11">
    <source>
    </source>
</evidence>
<evidence type="ECO:0000303" key="12">
    <source>
    </source>
</evidence>
<evidence type="ECO:0000303" key="13">
    <source>
    </source>
</evidence>
<evidence type="ECO:0000305" key="14"/>
<evidence type="ECO:0007829" key="15">
    <source>
        <dbReference type="PDB" id="4BHX"/>
    </source>
</evidence>
<comment type="function">
    <text evidence="1 5">Induces apoptosis in cooperation with SIAH1A. Acts as a mediator between p53/TP53 and BAX in a neuronal death pathway that is activated by DNA damage. Acts synergistically with TRAF2 and inhibits TNF induced apoptosis through activation of NF-kappa-B (By similarity). Possesses a tumor suppressing activity in glioma cells.</text>
</comment>
<comment type="subunit">
    <text evidence="1">Homodimer. Interacts with SIAH1A and SIAH2. Interacts with TRAF2 (By similarity).</text>
</comment>
<comment type="subcellular location">
    <subcellularLocation>
        <location evidence="3">Nucleus</location>
    </subcellularLocation>
    <subcellularLocation>
        <location evidence="1">Cytoplasm</location>
    </subcellularLocation>
</comment>
<comment type="alternative products">
    <event type="alternative splicing"/>
    <isoform>
        <id>Q9GZU2-1</id>
        <name>1</name>
        <sequence type="displayed"/>
    </isoform>
    <isoform>
        <id>Q9GZU2-2</id>
        <name>2</name>
        <sequence type="described" ref="VSP_020371"/>
    </isoform>
    <isoform>
        <id>Q9GZU2-3</id>
        <name>3</name>
        <sequence type="described" ref="VSP_020372 VSP_020373 VSP_020374"/>
    </isoform>
    <isoform>
        <id>Q9GZU2-4</id>
        <name>4</name>
        <sequence type="described" ref="VSP_020371 VSP_045527 VSP_045528"/>
    </isoform>
</comment>
<comment type="tissue specificity">
    <text evidence="5 6 10">Brain, glial cells, astrocytes, embryo, placenta, testis, ovary and uterus. In the placenta it is found in the layer of villous cytotrophoblast cells while in the ovary it is found in the cells of the ovarian stroma including the thecal layers around the follicles. Expression is highly repressed in glioma cell lines.</text>
</comment>
<comment type="domain">
    <text>The SCAN domain enables PEG3 homo- or heterodimerization to control gene expression in a combinatorial fashion.</text>
</comment>
<comment type="similarity">
    <text evidence="14">Belongs to the krueppel C2H2-type zinc-finger protein family.</text>
</comment>
<comment type="sequence caution" evidence="14">
    <conflict type="frameshift">
        <sequence resource="EMBL-CDS" id="BAB85588"/>
    </conflict>
</comment>
<comment type="sequence caution" evidence="14">
    <conflict type="erroneous initiation">
        <sequence resource="EMBL-CDS" id="CAI45975"/>
    </conflict>
</comment>
<comment type="online information" name="Atlas of Genetics and Cytogenetics in Oncology and Haematology">
    <link uri="https://atlasgeneticsoncology.org/gene/41690/PEG3"/>
</comment>